<feature type="chain" id="PRO_0000384592" description="Ribosome maturation factor RimP">
    <location>
        <begin position="1"/>
        <end position="198"/>
    </location>
</feature>
<comment type="function">
    <text evidence="1">Required for maturation of 30S ribosomal subunits.</text>
</comment>
<comment type="subcellular location">
    <subcellularLocation>
        <location evidence="1">Cytoplasm</location>
    </subcellularLocation>
</comment>
<comment type="similarity">
    <text evidence="1">Belongs to the RimP family.</text>
</comment>
<comment type="sequence caution" evidence="2">
    <conflict type="erroneous initiation">
        <sequence resource="EMBL-CDS" id="ACM24933"/>
    </conflict>
</comment>
<name>RIMP_RHIR8</name>
<protein>
    <recommendedName>
        <fullName evidence="1">Ribosome maturation factor RimP</fullName>
    </recommendedName>
</protein>
<evidence type="ECO:0000255" key="1">
    <source>
        <dbReference type="HAMAP-Rule" id="MF_01077"/>
    </source>
</evidence>
<evidence type="ECO:0000305" key="2"/>
<accession>B9JGT7</accession>
<gene>
    <name evidence="1" type="primary">rimP</name>
    <name type="ordered locus">Arad_0177</name>
</gene>
<dbReference type="EMBL" id="CP000628">
    <property type="protein sequence ID" value="ACM24933.1"/>
    <property type="status" value="ALT_INIT"/>
    <property type="molecule type" value="Genomic_DNA"/>
</dbReference>
<dbReference type="SMR" id="B9JGT7"/>
<dbReference type="STRING" id="311403.Arad_0177"/>
<dbReference type="KEGG" id="ara:Arad_0177"/>
<dbReference type="eggNOG" id="COG0779">
    <property type="taxonomic scope" value="Bacteria"/>
</dbReference>
<dbReference type="HOGENOM" id="CLU_070525_0_1_5"/>
<dbReference type="Proteomes" id="UP000001600">
    <property type="component" value="Chromosome 1"/>
</dbReference>
<dbReference type="GO" id="GO:0005829">
    <property type="term" value="C:cytosol"/>
    <property type="evidence" value="ECO:0007669"/>
    <property type="project" value="TreeGrafter"/>
</dbReference>
<dbReference type="GO" id="GO:0000028">
    <property type="term" value="P:ribosomal small subunit assembly"/>
    <property type="evidence" value="ECO:0007669"/>
    <property type="project" value="TreeGrafter"/>
</dbReference>
<dbReference type="GO" id="GO:0006412">
    <property type="term" value="P:translation"/>
    <property type="evidence" value="ECO:0007669"/>
    <property type="project" value="TreeGrafter"/>
</dbReference>
<dbReference type="CDD" id="cd01734">
    <property type="entry name" value="YlxS_C"/>
    <property type="match status" value="1"/>
</dbReference>
<dbReference type="Gene3D" id="2.30.30.180">
    <property type="entry name" value="Ribosome maturation factor RimP, C-terminal domain"/>
    <property type="match status" value="1"/>
</dbReference>
<dbReference type="Gene3D" id="3.30.300.70">
    <property type="entry name" value="RimP-like superfamily, N-terminal"/>
    <property type="match status" value="1"/>
</dbReference>
<dbReference type="HAMAP" id="MF_01077">
    <property type="entry name" value="RimP"/>
    <property type="match status" value="1"/>
</dbReference>
<dbReference type="InterPro" id="IPR003728">
    <property type="entry name" value="Ribosome_maturation_RimP"/>
</dbReference>
<dbReference type="InterPro" id="IPR028998">
    <property type="entry name" value="RimP_C"/>
</dbReference>
<dbReference type="InterPro" id="IPR036847">
    <property type="entry name" value="RimP_C_sf"/>
</dbReference>
<dbReference type="InterPro" id="IPR028989">
    <property type="entry name" value="RimP_N"/>
</dbReference>
<dbReference type="InterPro" id="IPR035956">
    <property type="entry name" value="RimP_N_sf"/>
</dbReference>
<dbReference type="NCBIfam" id="NF000932">
    <property type="entry name" value="PRK00092.2-5"/>
    <property type="match status" value="1"/>
</dbReference>
<dbReference type="PANTHER" id="PTHR33867">
    <property type="entry name" value="RIBOSOME MATURATION FACTOR RIMP"/>
    <property type="match status" value="1"/>
</dbReference>
<dbReference type="PANTHER" id="PTHR33867:SF1">
    <property type="entry name" value="RIBOSOME MATURATION FACTOR RIMP"/>
    <property type="match status" value="1"/>
</dbReference>
<dbReference type="Pfam" id="PF17384">
    <property type="entry name" value="DUF150_C"/>
    <property type="match status" value="1"/>
</dbReference>
<dbReference type="Pfam" id="PF02576">
    <property type="entry name" value="RimP_N"/>
    <property type="match status" value="1"/>
</dbReference>
<dbReference type="SUPFAM" id="SSF74942">
    <property type="entry name" value="YhbC-like, C-terminal domain"/>
    <property type="match status" value="1"/>
</dbReference>
<dbReference type="SUPFAM" id="SSF75420">
    <property type="entry name" value="YhbC-like, N-terminal domain"/>
    <property type="match status" value="1"/>
</dbReference>
<proteinExistence type="inferred from homology"/>
<keyword id="KW-0963">Cytoplasm</keyword>
<keyword id="KW-0690">Ribosome biogenesis</keyword>
<organism>
    <name type="scientific">Rhizobium rhizogenes (strain K84 / ATCC BAA-868)</name>
    <name type="common">Agrobacterium radiobacter</name>
    <dbReference type="NCBI Taxonomy" id="311403"/>
    <lineage>
        <taxon>Bacteria</taxon>
        <taxon>Pseudomonadati</taxon>
        <taxon>Pseudomonadota</taxon>
        <taxon>Alphaproteobacteria</taxon>
        <taxon>Hyphomicrobiales</taxon>
        <taxon>Rhizobiaceae</taxon>
        <taxon>Rhizobium/Agrobacterium group</taxon>
        <taxon>Rhizobium</taxon>
    </lineage>
</organism>
<reference key="1">
    <citation type="journal article" date="2009" name="J. Bacteriol.">
        <title>Genome sequences of three Agrobacterium biovars help elucidate the evolution of multichromosome genomes in bacteria.</title>
        <authorList>
            <person name="Slater S.C."/>
            <person name="Goldman B.S."/>
            <person name="Goodner B."/>
            <person name="Setubal J.C."/>
            <person name="Farrand S.K."/>
            <person name="Nester E.W."/>
            <person name="Burr T.J."/>
            <person name="Banta L."/>
            <person name="Dickerman A.W."/>
            <person name="Paulsen I."/>
            <person name="Otten L."/>
            <person name="Suen G."/>
            <person name="Welch R."/>
            <person name="Almeida N.F."/>
            <person name="Arnold F."/>
            <person name="Burton O.T."/>
            <person name="Du Z."/>
            <person name="Ewing A."/>
            <person name="Godsy E."/>
            <person name="Heisel S."/>
            <person name="Houmiel K.L."/>
            <person name="Jhaveri J."/>
            <person name="Lu J."/>
            <person name="Miller N.M."/>
            <person name="Norton S."/>
            <person name="Chen Q."/>
            <person name="Phoolcharoen W."/>
            <person name="Ohlin V."/>
            <person name="Ondrusek D."/>
            <person name="Pride N."/>
            <person name="Stricklin S.L."/>
            <person name="Sun J."/>
            <person name="Wheeler C."/>
            <person name="Wilson L."/>
            <person name="Zhu H."/>
            <person name="Wood D.W."/>
        </authorList>
    </citation>
    <scope>NUCLEOTIDE SEQUENCE [LARGE SCALE GENOMIC DNA]</scope>
    <source>
        <strain>K84 / ATCC BAA-868</strain>
    </source>
</reference>
<sequence length="198" mass="22195">MTNADNINEPRLIVETGLDQRIAAIIEPVIVGMDYRLVRVRLMNQNGLTLQVMAERNDGSMNVQGCEEISTAISPVLDVEDPVDKAYHLEVSSPGIDRPMVRKSDFVRWNGHIVKCETSILVDNRKRFRGKITDVNDDGFTIERDQVAYGEEPKVTIPFSTLAEAKLILTDDLIRDALRADKQAKAEAANQNEADEEE</sequence>